<name>NAGZ_TOLAT</name>
<sequence>MGPLMLDVQGCELDAEEREILRHPTVGGVILFGRNYHDRSQLSALVKTIRQAANKPLLIAVDHEGGRVQRFRNGFSRIPPMGILHKARNQATDLATECGWLMAAELLAHDIDLSFAPVLDLERGSNVIGDRSFSSDPEQVIQLASAFIDGMHQAGMKATGKHFPGHGSVRADSHLESPRDNRSWEEIEATDLVPFRELIPAGKLDAIMPAHVIYTELDDQPAGFSRFWLQEVLRGKYGFNGIIFSDDLTMEGAAVAGGYPERAQAALNAGCDMLLACNNRAGAVAILDGLQNPPASRAESLLSTNNGDWSRLTSTSRWKNTQNRVQIFTEEFVN</sequence>
<accession>C4LEY6</accession>
<dbReference type="EC" id="3.2.1.52" evidence="1"/>
<dbReference type="EMBL" id="CP001616">
    <property type="protein sequence ID" value="ACQ93153.1"/>
    <property type="molecule type" value="Genomic_DNA"/>
</dbReference>
<dbReference type="SMR" id="C4LEY6"/>
<dbReference type="STRING" id="595494.Tola_1542"/>
<dbReference type="CAZy" id="GH3">
    <property type="family name" value="Glycoside Hydrolase Family 3"/>
</dbReference>
<dbReference type="KEGG" id="tau:Tola_1542"/>
<dbReference type="eggNOG" id="COG1472">
    <property type="taxonomic scope" value="Bacteria"/>
</dbReference>
<dbReference type="HOGENOM" id="CLU_008392_0_0_6"/>
<dbReference type="OrthoDB" id="9786661at2"/>
<dbReference type="UniPathway" id="UPA00544"/>
<dbReference type="Proteomes" id="UP000009073">
    <property type="component" value="Chromosome"/>
</dbReference>
<dbReference type="GO" id="GO:0005737">
    <property type="term" value="C:cytoplasm"/>
    <property type="evidence" value="ECO:0007669"/>
    <property type="project" value="UniProtKB-SubCell"/>
</dbReference>
<dbReference type="GO" id="GO:0004563">
    <property type="term" value="F:beta-N-acetylhexosaminidase activity"/>
    <property type="evidence" value="ECO:0007669"/>
    <property type="project" value="UniProtKB-UniRule"/>
</dbReference>
<dbReference type="GO" id="GO:0005975">
    <property type="term" value="P:carbohydrate metabolic process"/>
    <property type="evidence" value="ECO:0007669"/>
    <property type="project" value="InterPro"/>
</dbReference>
<dbReference type="GO" id="GO:0051301">
    <property type="term" value="P:cell division"/>
    <property type="evidence" value="ECO:0007669"/>
    <property type="project" value="UniProtKB-KW"/>
</dbReference>
<dbReference type="GO" id="GO:0071555">
    <property type="term" value="P:cell wall organization"/>
    <property type="evidence" value="ECO:0007669"/>
    <property type="project" value="UniProtKB-KW"/>
</dbReference>
<dbReference type="GO" id="GO:0009252">
    <property type="term" value="P:peptidoglycan biosynthetic process"/>
    <property type="evidence" value="ECO:0007669"/>
    <property type="project" value="UniProtKB-KW"/>
</dbReference>
<dbReference type="GO" id="GO:0009254">
    <property type="term" value="P:peptidoglycan turnover"/>
    <property type="evidence" value="ECO:0007669"/>
    <property type="project" value="UniProtKB-UniRule"/>
</dbReference>
<dbReference type="GO" id="GO:0008360">
    <property type="term" value="P:regulation of cell shape"/>
    <property type="evidence" value="ECO:0007669"/>
    <property type="project" value="UniProtKB-KW"/>
</dbReference>
<dbReference type="FunFam" id="3.20.20.300:FF:000001">
    <property type="entry name" value="Beta-hexosaminidase"/>
    <property type="match status" value="1"/>
</dbReference>
<dbReference type="Gene3D" id="3.20.20.300">
    <property type="entry name" value="Glycoside hydrolase, family 3, N-terminal domain"/>
    <property type="match status" value="1"/>
</dbReference>
<dbReference type="HAMAP" id="MF_00364">
    <property type="entry name" value="NagZ"/>
    <property type="match status" value="1"/>
</dbReference>
<dbReference type="InterPro" id="IPR022956">
    <property type="entry name" value="Beta_hexosaminidase_bac"/>
</dbReference>
<dbReference type="InterPro" id="IPR019800">
    <property type="entry name" value="Glyco_hydro_3_AS"/>
</dbReference>
<dbReference type="InterPro" id="IPR001764">
    <property type="entry name" value="Glyco_hydro_3_N"/>
</dbReference>
<dbReference type="InterPro" id="IPR036962">
    <property type="entry name" value="Glyco_hydro_3_N_sf"/>
</dbReference>
<dbReference type="InterPro" id="IPR017853">
    <property type="entry name" value="Glycoside_hydrolase_SF"/>
</dbReference>
<dbReference type="InterPro" id="IPR050226">
    <property type="entry name" value="NagZ_Beta-hexosaminidase"/>
</dbReference>
<dbReference type="NCBIfam" id="NF003740">
    <property type="entry name" value="PRK05337.1"/>
    <property type="match status" value="1"/>
</dbReference>
<dbReference type="PANTHER" id="PTHR30480:SF13">
    <property type="entry name" value="BETA-HEXOSAMINIDASE"/>
    <property type="match status" value="1"/>
</dbReference>
<dbReference type="PANTHER" id="PTHR30480">
    <property type="entry name" value="BETA-HEXOSAMINIDASE-RELATED"/>
    <property type="match status" value="1"/>
</dbReference>
<dbReference type="Pfam" id="PF00933">
    <property type="entry name" value="Glyco_hydro_3"/>
    <property type="match status" value="1"/>
</dbReference>
<dbReference type="SUPFAM" id="SSF51445">
    <property type="entry name" value="(Trans)glycosidases"/>
    <property type="match status" value="1"/>
</dbReference>
<dbReference type="PROSITE" id="PS00775">
    <property type="entry name" value="GLYCOSYL_HYDROL_F3"/>
    <property type="match status" value="1"/>
</dbReference>
<keyword id="KW-0131">Cell cycle</keyword>
<keyword id="KW-0132">Cell division</keyword>
<keyword id="KW-0133">Cell shape</keyword>
<keyword id="KW-0961">Cell wall biogenesis/degradation</keyword>
<keyword id="KW-0963">Cytoplasm</keyword>
<keyword id="KW-0326">Glycosidase</keyword>
<keyword id="KW-0378">Hydrolase</keyword>
<keyword id="KW-0573">Peptidoglycan synthesis</keyword>
<keyword id="KW-1185">Reference proteome</keyword>
<evidence type="ECO:0000255" key="1">
    <source>
        <dbReference type="HAMAP-Rule" id="MF_00364"/>
    </source>
</evidence>
<feature type="chain" id="PRO_1000205462" description="Beta-hexosaminidase">
    <location>
        <begin position="1"/>
        <end position="334"/>
    </location>
</feature>
<feature type="active site" description="Proton donor/acceptor" evidence="1">
    <location>
        <position position="174"/>
    </location>
</feature>
<feature type="active site" description="Nucleophile" evidence="1">
    <location>
        <position position="246"/>
    </location>
</feature>
<feature type="binding site" evidence="1">
    <location>
        <position position="62"/>
    </location>
    <ligand>
        <name>substrate</name>
    </ligand>
</feature>
<feature type="binding site" evidence="1">
    <location>
        <position position="70"/>
    </location>
    <ligand>
        <name>substrate</name>
    </ligand>
</feature>
<feature type="binding site" evidence="1">
    <location>
        <position position="131"/>
    </location>
    <ligand>
        <name>substrate</name>
    </ligand>
</feature>
<feature type="binding site" evidence="1">
    <location>
        <begin position="161"/>
        <end position="162"/>
    </location>
    <ligand>
        <name>substrate</name>
    </ligand>
</feature>
<feature type="site" description="Important for catalytic activity" evidence="1">
    <location>
        <position position="172"/>
    </location>
</feature>
<organism>
    <name type="scientific">Tolumonas auensis (strain DSM 9187 / NBRC 110442 / TA 4)</name>
    <dbReference type="NCBI Taxonomy" id="595494"/>
    <lineage>
        <taxon>Bacteria</taxon>
        <taxon>Pseudomonadati</taxon>
        <taxon>Pseudomonadota</taxon>
        <taxon>Gammaproteobacteria</taxon>
        <taxon>Aeromonadales</taxon>
        <taxon>Aeromonadaceae</taxon>
        <taxon>Tolumonas</taxon>
    </lineage>
</organism>
<protein>
    <recommendedName>
        <fullName evidence="1">Beta-hexosaminidase</fullName>
        <ecNumber evidence="1">3.2.1.52</ecNumber>
    </recommendedName>
    <alternativeName>
        <fullName evidence="1">Beta-N-acetylhexosaminidase</fullName>
    </alternativeName>
    <alternativeName>
        <fullName evidence="1">N-acetyl-beta-glucosaminidase</fullName>
    </alternativeName>
</protein>
<gene>
    <name evidence="1" type="primary">nagZ</name>
    <name type="ordered locus">Tola_1542</name>
</gene>
<comment type="function">
    <text evidence="1">Plays a role in peptidoglycan recycling by cleaving the terminal beta-1,4-linked N-acetylglucosamine (GlcNAc) from peptide-linked peptidoglycan fragments, giving rise to free GlcNAc, anhydro-N-acetylmuramic acid and anhydro-N-acetylmuramic acid-linked peptides.</text>
</comment>
<comment type="catalytic activity">
    <reaction evidence="1">
        <text>Hydrolysis of terminal non-reducing N-acetyl-D-hexosamine residues in N-acetyl-beta-D-hexosaminides.</text>
        <dbReference type="EC" id="3.2.1.52"/>
    </reaction>
</comment>
<comment type="pathway">
    <text evidence="1">Cell wall biogenesis; peptidoglycan recycling.</text>
</comment>
<comment type="subcellular location">
    <subcellularLocation>
        <location evidence="1">Cytoplasm</location>
    </subcellularLocation>
</comment>
<comment type="similarity">
    <text evidence="1">Belongs to the glycosyl hydrolase 3 family. NagZ subfamily.</text>
</comment>
<reference key="1">
    <citation type="submission" date="2009-05" db="EMBL/GenBank/DDBJ databases">
        <title>Complete sequence of Tolumonas auensis DSM 9187.</title>
        <authorList>
            <consortium name="US DOE Joint Genome Institute"/>
            <person name="Lucas S."/>
            <person name="Copeland A."/>
            <person name="Lapidus A."/>
            <person name="Glavina del Rio T."/>
            <person name="Tice H."/>
            <person name="Bruce D."/>
            <person name="Goodwin L."/>
            <person name="Pitluck S."/>
            <person name="Chertkov O."/>
            <person name="Brettin T."/>
            <person name="Detter J.C."/>
            <person name="Han C."/>
            <person name="Larimer F."/>
            <person name="Land M."/>
            <person name="Hauser L."/>
            <person name="Kyrpides N."/>
            <person name="Mikhailova N."/>
            <person name="Spring S."/>
            <person name="Beller H."/>
        </authorList>
    </citation>
    <scope>NUCLEOTIDE SEQUENCE [LARGE SCALE GENOMIC DNA]</scope>
    <source>
        <strain>DSM 9187 / NBRC 110442 / TA 4</strain>
    </source>
</reference>
<proteinExistence type="inferred from homology"/>